<protein>
    <recommendedName>
        <fullName evidence="1">Tyrosine--tRNA ligase</fullName>
        <ecNumber evidence="1">6.1.1.1</ecNumber>
    </recommendedName>
    <alternativeName>
        <fullName evidence="1">Tyrosyl-tRNA synthetase</fullName>
        <shortName evidence="1">TyrRS</shortName>
    </alternativeName>
</protein>
<accession>A5ITQ1</accession>
<organism>
    <name type="scientific">Staphylococcus aureus (strain JH9)</name>
    <dbReference type="NCBI Taxonomy" id="359786"/>
    <lineage>
        <taxon>Bacteria</taxon>
        <taxon>Bacillati</taxon>
        <taxon>Bacillota</taxon>
        <taxon>Bacilli</taxon>
        <taxon>Bacillales</taxon>
        <taxon>Staphylococcaceae</taxon>
        <taxon>Staphylococcus</taxon>
    </lineage>
</organism>
<comment type="function">
    <text evidence="1">Catalyzes the attachment of tyrosine to tRNA(Tyr) in a two-step reaction: tyrosine is first activated by ATP to form Tyr-AMP and then transferred to the acceptor end of tRNA(Tyr).</text>
</comment>
<comment type="catalytic activity">
    <reaction evidence="1">
        <text>tRNA(Tyr) + L-tyrosine + ATP = L-tyrosyl-tRNA(Tyr) + AMP + diphosphate + H(+)</text>
        <dbReference type="Rhea" id="RHEA:10220"/>
        <dbReference type="Rhea" id="RHEA-COMP:9706"/>
        <dbReference type="Rhea" id="RHEA-COMP:9707"/>
        <dbReference type="ChEBI" id="CHEBI:15378"/>
        <dbReference type="ChEBI" id="CHEBI:30616"/>
        <dbReference type="ChEBI" id="CHEBI:33019"/>
        <dbReference type="ChEBI" id="CHEBI:58315"/>
        <dbReference type="ChEBI" id="CHEBI:78442"/>
        <dbReference type="ChEBI" id="CHEBI:78536"/>
        <dbReference type="ChEBI" id="CHEBI:456215"/>
        <dbReference type="EC" id="6.1.1.1"/>
    </reaction>
</comment>
<comment type="subunit">
    <text evidence="1">Homodimer.</text>
</comment>
<comment type="subcellular location">
    <subcellularLocation>
        <location evidence="1">Cytoplasm</location>
    </subcellularLocation>
</comment>
<comment type="similarity">
    <text evidence="1">Belongs to the class-I aminoacyl-tRNA synthetase family. TyrS type 1 subfamily.</text>
</comment>
<feature type="chain" id="PRO_1000088629" description="Tyrosine--tRNA ligase">
    <location>
        <begin position="1"/>
        <end position="420"/>
    </location>
</feature>
<feature type="domain" description="S4 RNA-binding" evidence="1">
    <location>
        <begin position="353"/>
        <end position="420"/>
    </location>
</feature>
<feature type="short sequence motif" description="'HIGH' region">
    <location>
        <begin position="41"/>
        <end position="50"/>
    </location>
</feature>
<feature type="short sequence motif" description="'KMSKS' region">
    <location>
        <begin position="231"/>
        <end position="235"/>
    </location>
</feature>
<feature type="binding site" evidence="1">
    <location>
        <position position="36"/>
    </location>
    <ligand>
        <name>L-tyrosine</name>
        <dbReference type="ChEBI" id="CHEBI:58315"/>
    </ligand>
</feature>
<feature type="binding site" evidence="1">
    <location>
        <position position="170"/>
    </location>
    <ligand>
        <name>L-tyrosine</name>
        <dbReference type="ChEBI" id="CHEBI:58315"/>
    </ligand>
</feature>
<feature type="binding site" evidence="1">
    <location>
        <position position="174"/>
    </location>
    <ligand>
        <name>L-tyrosine</name>
        <dbReference type="ChEBI" id="CHEBI:58315"/>
    </ligand>
</feature>
<feature type="binding site" evidence="1">
    <location>
        <position position="234"/>
    </location>
    <ligand>
        <name>ATP</name>
        <dbReference type="ChEBI" id="CHEBI:30616"/>
    </ligand>
</feature>
<gene>
    <name evidence="1" type="primary">tyrS</name>
    <name type="ordered locus">SaurJH9_1784</name>
</gene>
<proteinExistence type="inferred from homology"/>
<sequence length="420" mass="47598">MTNVLIEDLKWRGLIYQQTDEQGIEDLLNKEQVTLYCGADPTADSLHIGHLLPFLTLRRFQEHGHRPIVLIGGGTGMIGDPSGKSEERVLQTEEQVDKNIEGISKQMHNIFEFGTDHGAVLVNNRDWLGQISLISFLRDYGKHVGVNYMLGKDSIQSRLEHGISYTEFTYTILQAIDFGHLNRELNCKIQVGGSDQWGNITSGIELMRRMYGQTDAYGLTIPLVTKSDGKKFGKSESGAVWLDAEKTSPYEFYQFWINQSDEDVIKFLKYFTFLGKEEIDRLEQSKNEAPHLREAQKTLAEEVTKFIHGEDALNDAIRISQALFSGDLKSLSAKELKDGFKDVPQVTLSNDTTNIVEVLIETGISPSKRQAREDVNNGAIYINGERQQDVNYALAPEDKIDGEFTIIRRGKKKYFMVNYQ</sequence>
<reference key="1">
    <citation type="submission" date="2007-05" db="EMBL/GenBank/DDBJ databases">
        <title>Complete sequence of chromosome of Staphylococcus aureus subsp. aureus JH9.</title>
        <authorList>
            <consortium name="US DOE Joint Genome Institute"/>
            <person name="Copeland A."/>
            <person name="Lucas S."/>
            <person name="Lapidus A."/>
            <person name="Barry K."/>
            <person name="Detter J.C."/>
            <person name="Glavina del Rio T."/>
            <person name="Hammon N."/>
            <person name="Israni S."/>
            <person name="Pitluck S."/>
            <person name="Chain P."/>
            <person name="Malfatti S."/>
            <person name="Shin M."/>
            <person name="Vergez L."/>
            <person name="Schmutz J."/>
            <person name="Larimer F."/>
            <person name="Land M."/>
            <person name="Hauser L."/>
            <person name="Kyrpides N."/>
            <person name="Kim E."/>
            <person name="Tomasz A."/>
            <person name="Richardson P."/>
        </authorList>
    </citation>
    <scope>NUCLEOTIDE SEQUENCE [LARGE SCALE GENOMIC DNA]</scope>
    <source>
        <strain>JH9</strain>
    </source>
</reference>
<dbReference type="EC" id="6.1.1.1" evidence="1"/>
<dbReference type="EMBL" id="CP000703">
    <property type="protein sequence ID" value="ABQ49574.1"/>
    <property type="molecule type" value="Genomic_DNA"/>
</dbReference>
<dbReference type="RefSeq" id="WP_000186029.1">
    <property type="nucleotide sequence ID" value="NC_009487.1"/>
</dbReference>
<dbReference type="SMR" id="A5ITQ1"/>
<dbReference type="KEGG" id="saj:SaurJH9_1784"/>
<dbReference type="HOGENOM" id="CLU_024003_0_3_9"/>
<dbReference type="GO" id="GO:0005829">
    <property type="term" value="C:cytosol"/>
    <property type="evidence" value="ECO:0007669"/>
    <property type="project" value="TreeGrafter"/>
</dbReference>
<dbReference type="GO" id="GO:0005524">
    <property type="term" value="F:ATP binding"/>
    <property type="evidence" value="ECO:0007669"/>
    <property type="project" value="UniProtKB-UniRule"/>
</dbReference>
<dbReference type="GO" id="GO:0003723">
    <property type="term" value="F:RNA binding"/>
    <property type="evidence" value="ECO:0007669"/>
    <property type="project" value="UniProtKB-KW"/>
</dbReference>
<dbReference type="GO" id="GO:0004831">
    <property type="term" value="F:tyrosine-tRNA ligase activity"/>
    <property type="evidence" value="ECO:0007669"/>
    <property type="project" value="UniProtKB-UniRule"/>
</dbReference>
<dbReference type="GO" id="GO:0006437">
    <property type="term" value="P:tyrosyl-tRNA aminoacylation"/>
    <property type="evidence" value="ECO:0007669"/>
    <property type="project" value="UniProtKB-UniRule"/>
</dbReference>
<dbReference type="CDD" id="cd00165">
    <property type="entry name" value="S4"/>
    <property type="match status" value="1"/>
</dbReference>
<dbReference type="CDD" id="cd00395">
    <property type="entry name" value="Tyr_Trp_RS_core"/>
    <property type="match status" value="1"/>
</dbReference>
<dbReference type="FunFam" id="1.10.240.10:FF:000001">
    <property type="entry name" value="Tyrosine--tRNA ligase"/>
    <property type="match status" value="1"/>
</dbReference>
<dbReference type="FunFam" id="3.10.290.10:FF:000012">
    <property type="entry name" value="Tyrosine--tRNA ligase"/>
    <property type="match status" value="1"/>
</dbReference>
<dbReference type="FunFam" id="3.40.50.620:FF:000008">
    <property type="entry name" value="Tyrosine--tRNA ligase"/>
    <property type="match status" value="1"/>
</dbReference>
<dbReference type="Gene3D" id="3.40.50.620">
    <property type="entry name" value="HUPs"/>
    <property type="match status" value="1"/>
</dbReference>
<dbReference type="Gene3D" id="3.10.290.10">
    <property type="entry name" value="RNA-binding S4 domain"/>
    <property type="match status" value="1"/>
</dbReference>
<dbReference type="Gene3D" id="1.10.240.10">
    <property type="entry name" value="Tyrosyl-Transfer RNA Synthetase"/>
    <property type="match status" value="1"/>
</dbReference>
<dbReference type="HAMAP" id="MF_02006">
    <property type="entry name" value="Tyr_tRNA_synth_type1"/>
    <property type="match status" value="1"/>
</dbReference>
<dbReference type="InterPro" id="IPR001412">
    <property type="entry name" value="aa-tRNA-synth_I_CS"/>
</dbReference>
<dbReference type="InterPro" id="IPR002305">
    <property type="entry name" value="aa-tRNA-synth_Ic"/>
</dbReference>
<dbReference type="InterPro" id="IPR014729">
    <property type="entry name" value="Rossmann-like_a/b/a_fold"/>
</dbReference>
<dbReference type="InterPro" id="IPR002942">
    <property type="entry name" value="S4_RNA-bd"/>
</dbReference>
<dbReference type="InterPro" id="IPR036986">
    <property type="entry name" value="S4_RNA-bd_sf"/>
</dbReference>
<dbReference type="InterPro" id="IPR054608">
    <property type="entry name" value="SYY-like_C"/>
</dbReference>
<dbReference type="InterPro" id="IPR002307">
    <property type="entry name" value="Tyr-tRNA-ligase"/>
</dbReference>
<dbReference type="InterPro" id="IPR024088">
    <property type="entry name" value="Tyr-tRNA-ligase_bac-type"/>
</dbReference>
<dbReference type="InterPro" id="IPR024107">
    <property type="entry name" value="Tyr-tRNA-ligase_bac_1"/>
</dbReference>
<dbReference type="NCBIfam" id="TIGR00234">
    <property type="entry name" value="tyrS"/>
    <property type="match status" value="1"/>
</dbReference>
<dbReference type="PANTHER" id="PTHR11766:SF0">
    <property type="entry name" value="TYROSINE--TRNA LIGASE, MITOCHONDRIAL"/>
    <property type="match status" value="1"/>
</dbReference>
<dbReference type="PANTHER" id="PTHR11766">
    <property type="entry name" value="TYROSYL-TRNA SYNTHETASE"/>
    <property type="match status" value="1"/>
</dbReference>
<dbReference type="Pfam" id="PF22421">
    <property type="entry name" value="SYY_C-terminal"/>
    <property type="match status" value="1"/>
</dbReference>
<dbReference type="Pfam" id="PF00579">
    <property type="entry name" value="tRNA-synt_1b"/>
    <property type="match status" value="1"/>
</dbReference>
<dbReference type="PRINTS" id="PR01040">
    <property type="entry name" value="TRNASYNTHTYR"/>
</dbReference>
<dbReference type="SMART" id="SM00363">
    <property type="entry name" value="S4"/>
    <property type="match status" value="1"/>
</dbReference>
<dbReference type="SUPFAM" id="SSF55174">
    <property type="entry name" value="Alpha-L RNA-binding motif"/>
    <property type="match status" value="1"/>
</dbReference>
<dbReference type="SUPFAM" id="SSF52374">
    <property type="entry name" value="Nucleotidylyl transferase"/>
    <property type="match status" value="1"/>
</dbReference>
<dbReference type="PROSITE" id="PS00178">
    <property type="entry name" value="AA_TRNA_LIGASE_I"/>
    <property type="match status" value="1"/>
</dbReference>
<dbReference type="PROSITE" id="PS50889">
    <property type="entry name" value="S4"/>
    <property type="match status" value="1"/>
</dbReference>
<keyword id="KW-0030">Aminoacyl-tRNA synthetase</keyword>
<keyword id="KW-0067">ATP-binding</keyword>
<keyword id="KW-0963">Cytoplasm</keyword>
<keyword id="KW-0436">Ligase</keyword>
<keyword id="KW-0547">Nucleotide-binding</keyword>
<keyword id="KW-0648">Protein biosynthesis</keyword>
<keyword id="KW-0694">RNA-binding</keyword>
<name>SYY_STAA9</name>
<evidence type="ECO:0000255" key="1">
    <source>
        <dbReference type="HAMAP-Rule" id="MF_02006"/>
    </source>
</evidence>